<dbReference type="EMBL" id="Y08501">
    <property type="protein sequence ID" value="CAA69779.1"/>
    <property type="molecule type" value="Genomic_DNA"/>
</dbReference>
<dbReference type="EMBL" id="BK010421">
    <property type="status" value="NOT_ANNOTATED_CDS"/>
    <property type="molecule type" value="Genomic_DNA"/>
</dbReference>
<dbReference type="RefSeq" id="NP_085474.1">
    <property type="nucleotide sequence ID" value="NC_001284.2"/>
</dbReference>
<dbReference type="STRING" id="3702.P93275"/>
<dbReference type="PaxDb" id="3702-ATMG00010.1"/>
<dbReference type="EnsemblPlants" id="ATMG00010.1">
    <property type="protein sequence ID" value="ATMG00010.1"/>
    <property type="gene ID" value="ATMG00010"/>
</dbReference>
<dbReference type="Gramene" id="ATMG00010.1">
    <property type="protein sequence ID" value="ATMG00010.1"/>
    <property type="gene ID" value="ATMG00010"/>
</dbReference>
<dbReference type="Araport" id="ATMG00010"/>
<dbReference type="TAIR" id="ATMG00010">
    <property type="gene designation" value="ORF153A"/>
</dbReference>
<dbReference type="eggNOG" id="KOG0017">
    <property type="taxonomic scope" value="Eukaryota"/>
</dbReference>
<dbReference type="HOGENOM" id="CLU_1715760_0_0_1"/>
<dbReference type="InParanoid" id="P93275"/>
<dbReference type="PRO" id="PR:P93275"/>
<dbReference type="Proteomes" id="UP000006548">
    <property type="component" value="Mitochondrion MT"/>
</dbReference>
<dbReference type="GO" id="GO:0005739">
    <property type="term" value="C:mitochondrion"/>
    <property type="evidence" value="ECO:0007669"/>
    <property type="project" value="UniProtKB-SubCell"/>
</dbReference>
<keyword id="KW-0496">Mitochondrion</keyword>
<keyword id="KW-1185">Reference proteome</keyword>
<evidence type="ECO:0000305" key="1"/>
<name>M010_ARATH</name>
<organism>
    <name type="scientific">Arabidopsis thaliana</name>
    <name type="common">Mouse-ear cress</name>
    <dbReference type="NCBI Taxonomy" id="3702"/>
    <lineage>
        <taxon>Eukaryota</taxon>
        <taxon>Viridiplantae</taxon>
        <taxon>Streptophyta</taxon>
        <taxon>Embryophyta</taxon>
        <taxon>Tracheophyta</taxon>
        <taxon>Spermatophyta</taxon>
        <taxon>Magnoliopsida</taxon>
        <taxon>eudicotyledons</taxon>
        <taxon>Gunneridae</taxon>
        <taxon>Pentapetalae</taxon>
        <taxon>rosids</taxon>
        <taxon>malvids</taxon>
        <taxon>Brassicales</taxon>
        <taxon>Brassicaceae</taxon>
        <taxon>Camelineae</taxon>
        <taxon>Arabidopsis</taxon>
    </lineage>
</organism>
<sequence length="153" mass="16759">MSLLFQQTVPLSHLHRSLDPPLCFRTHILLILLLLSRHLPGFTGSDCESADPSIVSAIAPGTATTSERDCPVRTAGSDPVPIGDSGTFFDVGTAAPELLSPNRHHMITRAKDGIRKPNPRYNLFTQKYTPSEPKTITSASQDGDKLCKKRCRH</sequence>
<proteinExistence type="predicted"/>
<gene>
    <name type="ordered locus">AtMg00010</name>
</gene>
<feature type="chain" id="PRO_0000196752" description="Uncharacterized mitochondrial protein AtMg00010">
    <location>
        <begin position="1"/>
        <end position="153"/>
    </location>
</feature>
<comment type="subcellular location">
    <subcellularLocation>
        <location evidence="1">Mitochondrion</location>
    </subcellularLocation>
</comment>
<reference key="1">
    <citation type="journal article" date="1997" name="Nat. Genet.">
        <title>The mitochondrial genome of Arabidopsis thaliana contains 57 genes in 366,924 nucleotides.</title>
        <authorList>
            <person name="Unseld M."/>
            <person name="Marienfeld J.R."/>
            <person name="Brandt P."/>
            <person name="Brennicke A."/>
        </authorList>
    </citation>
    <scope>NUCLEOTIDE SEQUENCE [LARGE SCALE GENOMIC DNA]</scope>
    <source>
        <strain>cv. C24</strain>
    </source>
</reference>
<reference key="2">
    <citation type="journal article" date="2018" name="Plant Cell">
        <title>Correction of persistent errors in Arabidopsis reference mitochondrial genomes.</title>
        <authorList>
            <person name="Sloan D.B."/>
            <person name="Wu Z."/>
            <person name="Sharbrough J."/>
        </authorList>
    </citation>
    <scope>NUCLEOTIDE SEQUENCE [LARGE SCALE GENOMIC DNA]</scope>
    <source>
        <strain>cv. Columbia</strain>
    </source>
</reference>
<accession>P93275</accession>
<protein>
    <recommendedName>
        <fullName>Uncharacterized mitochondrial protein AtMg00010</fullName>
    </recommendedName>
    <alternativeName>
        <fullName>ORF153a</fullName>
    </alternativeName>
</protein>
<geneLocation type="mitochondrion"/>